<evidence type="ECO:0000255" key="1"/>
<evidence type="ECO:0000255" key="2">
    <source>
        <dbReference type="PROSITE-ProRule" id="PRU00448"/>
    </source>
</evidence>
<evidence type="ECO:0000255" key="3">
    <source>
        <dbReference type="PROSITE-ProRule" id="PRU00757"/>
    </source>
</evidence>
<evidence type="ECO:0000255" key="4">
    <source>
        <dbReference type="PROSITE-ProRule" id="PRU10142"/>
    </source>
</evidence>
<evidence type="ECO:0000269" key="5">
    <source>
    </source>
</evidence>
<evidence type="ECO:0000269" key="6">
    <source>
    </source>
</evidence>
<evidence type="ECO:0000269" key="7">
    <source>
    </source>
</evidence>
<evidence type="ECO:0000303" key="8">
    <source>
    </source>
</evidence>
<evidence type="ECO:0000303" key="9">
    <source>
    </source>
</evidence>
<evidence type="ECO:0000305" key="10"/>
<evidence type="ECO:0000305" key="11">
    <source>
    </source>
</evidence>
<evidence type="ECO:0000312" key="12">
    <source>
        <dbReference type="Araport" id="AT5G27540"/>
    </source>
</evidence>
<evidence type="ECO:0007744" key="13">
    <source>
    </source>
</evidence>
<dbReference type="EC" id="3.6.5.-" evidence="10"/>
<dbReference type="EMBL" id="AC007478">
    <property type="status" value="NOT_ANNOTATED_CDS"/>
    <property type="molecule type" value="Genomic_DNA"/>
</dbReference>
<dbReference type="EMBL" id="CP002688">
    <property type="protein sequence ID" value="AED93698.1"/>
    <property type="molecule type" value="Genomic_DNA"/>
</dbReference>
<dbReference type="EMBL" id="CP002688">
    <property type="protein sequence ID" value="AED93699.1"/>
    <property type="molecule type" value="Genomic_DNA"/>
</dbReference>
<dbReference type="EMBL" id="AY081280">
    <property type="protein sequence ID" value="AAL91169.1"/>
    <property type="molecule type" value="mRNA"/>
</dbReference>
<dbReference type="EMBL" id="BT003352">
    <property type="protein sequence ID" value="AAO29970.1"/>
    <property type="molecule type" value="mRNA"/>
</dbReference>
<dbReference type="RefSeq" id="NP_001031953.1">
    <property type="nucleotide sequence ID" value="NM_001036876.2"/>
</dbReference>
<dbReference type="RefSeq" id="NP_198106.1">
    <property type="nucleotide sequence ID" value="NM_122636.4"/>
</dbReference>
<dbReference type="SMR" id="Q8RXF8"/>
<dbReference type="FunCoup" id="Q8RXF8">
    <property type="interactions" value="4430"/>
</dbReference>
<dbReference type="IntAct" id="Q8RXF8">
    <property type="interactions" value="5"/>
</dbReference>
<dbReference type="STRING" id="3702.Q8RXF8"/>
<dbReference type="iPTMnet" id="Q8RXF8"/>
<dbReference type="SwissPalm" id="Q8RXF8"/>
<dbReference type="PaxDb" id="3702-AT5G27540.1"/>
<dbReference type="ProteomicsDB" id="237032"/>
<dbReference type="EnsemblPlants" id="AT5G27540.1">
    <property type="protein sequence ID" value="AT5G27540.1"/>
    <property type="gene ID" value="AT5G27540"/>
</dbReference>
<dbReference type="EnsemblPlants" id="AT5G27540.2">
    <property type="protein sequence ID" value="AT5G27540.2"/>
    <property type="gene ID" value="AT5G27540"/>
</dbReference>
<dbReference type="GeneID" id="832814"/>
<dbReference type="Gramene" id="AT5G27540.1">
    <property type="protein sequence ID" value="AT5G27540.1"/>
    <property type="gene ID" value="AT5G27540"/>
</dbReference>
<dbReference type="Gramene" id="AT5G27540.2">
    <property type="protein sequence ID" value="AT5G27540.2"/>
    <property type="gene ID" value="AT5G27540"/>
</dbReference>
<dbReference type="KEGG" id="ath:AT5G27540"/>
<dbReference type="Araport" id="AT5G27540"/>
<dbReference type="TAIR" id="AT5G27540">
    <property type="gene designation" value="MIRO1"/>
</dbReference>
<dbReference type="eggNOG" id="KOG1707">
    <property type="taxonomic scope" value="Eukaryota"/>
</dbReference>
<dbReference type="HOGENOM" id="CLU_014255_2_1_1"/>
<dbReference type="InParanoid" id="Q8RXF8"/>
<dbReference type="OMA" id="EGFISKW"/>
<dbReference type="PhylomeDB" id="Q8RXF8"/>
<dbReference type="CD-CODE" id="4299E36E">
    <property type="entry name" value="Nucleolus"/>
</dbReference>
<dbReference type="PRO" id="PR:Q8RXF8"/>
<dbReference type="Proteomes" id="UP000006548">
    <property type="component" value="Chromosome 5"/>
</dbReference>
<dbReference type="ExpressionAtlas" id="Q8RXF8">
    <property type="expression patterns" value="baseline and differential"/>
</dbReference>
<dbReference type="GO" id="GO:0005741">
    <property type="term" value="C:mitochondrial outer membrane"/>
    <property type="evidence" value="ECO:0007669"/>
    <property type="project" value="UniProtKB-SubCell"/>
</dbReference>
<dbReference type="GO" id="GO:0005739">
    <property type="term" value="C:mitochondrion"/>
    <property type="evidence" value="ECO:0000314"/>
    <property type="project" value="TAIR"/>
</dbReference>
<dbReference type="GO" id="GO:0009536">
    <property type="term" value="C:plastid"/>
    <property type="evidence" value="ECO:0007005"/>
    <property type="project" value="TAIR"/>
</dbReference>
<dbReference type="GO" id="GO:0005509">
    <property type="term" value="F:calcium ion binding"/>
    <property type="evidence" value="ECO:0007669"/>
    <property type="project" value="InterPro"/>
</dbReference>
<dbReference type="GO" id="GO:0005525">
    <property type="term" value="F:GTP binding"/>
    <property type="evidence" value="ECO:0007669"/>
    <property type="project" value="UniProtKB-KW"/>
</dbReference>
<dbReference type="GO" id="GO:0003924">
    <property type="term" value="F:GTPase activity"/>
    <property type="evidence" value="ECO:0007669"/>
    <property type="project" value="InterPro"/>
</dbReference>
<dbReference type="GO" id="GO:0009793">
    <property type="term" value="P:embryo development ending in seed dormancy"/>
    <property type="evidence" value="ECO:0000315"/>
    <property type="project" value="TAIR"/>
</dbReference>
<dbReference type="GO" id="GO:0007005">
    <property type="term" value="P:mitochondrion organization"/>
    <property type="evidence" value="ECO:0000315"/>
    <property type="project" value="TAIR"/>
</dbReference>
<dbReference type="GO" id="GO:0009860">
    <property type="term" value="P:pollen tube growth"/>
    <property type="evidence" value="ECO:0000315"/>
    <property type="project" value="TAIR"/>
</dbReference>
<dbReference type="CDD" id="cd01893">
    <property type="entry name" value="Miro1"/>
    <property type="match status" value="1"/>
</dbReference>
<dbReference type="CDD" id="cd01892">
    <property type="entry name" value="Miro2"/>
    <property type="match status" value="1"/>
</dbReference>
<dbReference type="FunFam" id="1.10.238.10:FF:000011">
    <property type="entry name" value="Mitochondrial Rho GTPase"/>
    <property type="match status" value="1"/>
</dbReference>
<dbReference type="FunFam" id="1.10.238.10:FF:000212">
    <property type="entry name" value="Mitochondrial Rho GTPase"/>
    <property type="match status" value="1"/>
</dbReference>
<dbReference type="FunFam" id="3.40.50.300:FF:000553">
    <property type="entry name" value="Mitochondrial Rho GTPase"/>
    <property type="match status" value="1"/>
</dbReference>
<dbReference type="FunFam" id="3.40.50.300:FF:000935">
    <property type="entry name" value="Mitochondrial Rho GTPase"/>
    <property type="match status" value="1"/>
</dbReference>
<dbReference type="Gene3D" id="1.10.238.10">
    <property type="entry name" value="EF-hand"/>
    <property type="match status" value="2"/>
</dbReference>
<dbReference type="Gene3D" id="3.40.50.300">
    <property type="entry name" value="P-loop containing nucleotide triphosphate hydrolases"/>
    <property type="match status" value="2"/>
</dbReference>
<dbReference type="InterPro" id="IPR011992">
    <property type="entry name" value="EF-hand-dom_pair"/>
</dbReference>
<dbReference type="InterPro" id="IPR018247">
    <property type="entry name" value="EF_Hand_1_Ca_BS"/>
</dbReference>
<dbReference type="InterPro" id="IPR013566">
    <property type="entry name" value="EF_hand_assoc_1"/>
</dbReference>
<dbReference type="InterPro" id="IPR013567">
    <property type="entry name" value="EF_hand_assoc_2"/>
</dbReference>
<dbReference type="InterPro" id="IPR021181">
    <property type="entry name" value="Miro"/>
</dbReference>
<dbReference type="InterPro" id="IPR052266">
    <property type="entry name" value="Miro-EF-hand_domain"/>
</dbReference>
<dbReference type="InterPro" id="IPR020860">
    <property type="entry name" value="MIRO_dom"/>
</dbReference>
<dbReference type="InterPro" id="IPR027417">
    <property type="entry name" value="P-loop_NTPase"/>
</dbReference>
<dbReference type="InterPro" id="IPR001806">
    <property type="entry name" value="Small_GTPase"/>
</dbReference>
<dbReference type="PANTHER" id="PTHR46819">
    <property type="entry name" value="EF-HAND CALCIUM-BINDING DOMAIN-CONTAINING PROTEIN 7"/>
    <property type="match status" value="1"/>
</dbReference>
<dbReference type="PANTHER" id="PTHR46819:SF1">
    <property type="entry name" value="EF-HAND CALCIUM-BINDING DOMAIN-CONTAINING PROTEIN 7"/>
    <property type="match status" value="1"/>
</dbReference>
<dbReference type="Pfam" id="PF08355">
    <property type="entry name" value="EF_assoc_1"/>
    <property type="match status" value="1"/>
</dbReference>
<dbReference type="Pfam" id="PF08356">
    <property type="entry name" value="EF_assoc_2"/>
    <property type="match status" value="1"/>
</dbReference>
<dbReference type="Pfam" id="PF00071">
    <property type="entry name" value="Ras"/>
    <property type="match status" value="2"/>
</dbReference>
<dbReference type="PIRSF" id="PIRSF037488">
    <property type="entry name" value="Mt_Rho_GTPase"/>
    <property type="match status" value="1"/>
</dbReference>
<dbReference type="PRINTS" id="PR00449">
    <property type="entry name" value="RASTRNSFRMNG"/>
</dbReference>
<dbReference type="SMART" id="SM00175">
    <property type="entry name" value="RAB"/>
    <property type="match status" value="1"/>
</dbReference>
<dbReference type="SMART" id="SM00174">
    <property type="entry name" value="RHO"/>
    <property type="match status" value="1"/>
</dbReference>
<dbReference type="SUPFAM" id="SSF47473">
    <property type="entry name" value="EF-hand"/>
    <property type="match status" value="1"/>
</dbReference>
<dbReference type="SUPFAM" id="SSF52540">
    <property type="entry name" value="P-loop containing nucleoside triphosphate hydrolases"/>
    <property type="match status" value="2"/>
</dbReference>
<dbReference type="PROSITE" id="PS00018">
    <property type="entry name" value="EF_HAND_1"/>
    <property type="match status" value="1"/>
</dbReference>
<dbReference type="PROSITE" id="PS51423">
    <property type="entry name" value="MIRO"/>
    <property type="match status" value="2"/>
</dbReference>
<accession>Q8RXF8</accession>
<sequence>MARYAAGAVDCPGSPKSVRIVVVGDKGTGKSSLIVAAATDSFPPNVPPVLPDYKLPIEFFPDGIPVTIVDTSSRPEDRDIVAEELKRADAVVLTYACDRPETLERLSEYWLPELRRLEVKIPIIVAGCKLDFRDDNNQVSLEQVMSPIMQQFREIETCIECSALKQLQAQEVFYYAQKTVLHPTGPLFDQDSQALKPRCVRALKRIFILCDHDRDGALSEAELNDFQVKCFHAPLQPSEIEGVKRVVQEKLPEGVNERGLTVTGFLFLHALFIEKGRLETTWTVLRKFGYNNDIRLAEELLPSAIFKRAPDQSFELTNAAIDFLKGMYMLFDDDQDNNLRPQEIEDLFSTAPESPWKEAPYEDAAEKTALGGLSFDAFLSMWSLMTLLEPARSVENLIYIGFPGDPSTAIRVTRRRRLDRKKQQCERKVFQCFVFGPNNAGKSALLNCFLGRSYTDNQESTTDERYAVNMVDESGAKKTLIMREIPEDGVQGLFSSKESLAACDIAVFVYDSSDESSWKRATQLLVEVANYGEATGYEVPCLMVSAKDDLDSSPISIQESTRMTQDMGIEPPVSISSKLGDFNNLFRKILTAAQHPHLSIPETEAGKSRKHYNRLINRSLMAVSIGAAAVVVGLAAYRVYATRKSSSA</sequence>
<feature type="chain" id="PRO_0000431715" description="Mitochondrial Rho GTPase 1">
    <location>
        <begin position="1"/>
        <end position="648"/>
    </location>
</feature>
<feature type="topological domain" description="Cytoplasmic" evidence="10">
    <location>
        <begin position="1"/>
        <end position="619"/>
    </location>
</feature>
<feature type="transmembrane region" description="Helical" evidence="1">
    <location>
        <begin position="620"/>
        <end position="640"/>
    </location>
</feature>
<feature type="topological domain" description="Mitochondrial intermembrane" evidence="10">
    <location>
        <begin position="641"/>
        <end position="648"/>
    </location>
</feature>
<feature type="domain" description="Miro 1" evidence="3">
    <location>
        <begin position="15"/>
        <end position="182"/>
    </location>
</feature>
<feature type="domain" description="EF-hand 1" evidence="2">
    <location>
        <begin position="198"/>
        <end position="233"/>
    </location>
</feature>
<feature type="domain" description="EF-hand 2" evidence="2">
    <location>
        <begin position="319"/>
        <end position="354"/>
    </location>
</feature>
<feature type="domain" description="Miro 2" evidence="3">
    <location>
        <begin position="427"/>
        <end position="595"/>
    </location>
</feature>
<feature type="binding site" evidence="4">
    <location>
        <position position="211"/>
    </location>
    <ligand>
        <name>Ca(2+)</name>
        <dbReference type="ChEBI" id="CHEBI:29108"/>
        <label>1</label>
    </ligand>
</feature>
<feature type="binding site" evidence="4">
    <location>
        <position position="213"/>
    </location>
    <ligand>
        <name>Ca(2+)</name>
        <dbReference type="ChEBI" id="CHEBI:29108"/>
        <label>1</label>
    </ligand>
</feature>
<feature type="binding site" evidence="4">
    <location>
        <position position="215"/>
    </location>
    <ligand>
        <name>Ca(2+)</name>
        <dbReference type="ChEBI" id="CHEBI:29108"/>
        <label>1</label>
    </ligand>
</feature>
<feature type="binding site" evidence="4">
    <location>
        <position position="222"/>
    </location>
    <ligand>
        <name>Ca(2+)</name>
        <dbReference type="ChEBI" id="CHEBI:29108"/>
        <label>1</label>
    </ligand>
</feature>
<feature type="binding site" evidence="10">
    <location>
        <position position="332"/>
    </location>
    <ligand>
        <name>Ca(2+)</name>
        <dbReference type="ChEBI" id="CHEBI:29108"/>
        <label>2</label>
    </ligand>
</feature>
<feature type="binding site" evidence="10">
    <location>
        <position position="334"/>
    </location>
    <ligand>
        <name>Ca(2+)</name>
        <dbReference type="ChEBI" id="CHEBI:29108"/>
        <label>2</label>
    </ligand>
</feature>
<feature type="binding site" evidence="10">
    <location>
        <position position="336"/>
    </location>
    <ligand>
        <name>Ca(2+)</name>
        <dbReference type="ChEBI" id="CHEBI:29108"/>
        <label>2</label>
    </ligand>
</feature>
<feature type="binding site" evidence="10">
    <location>
        <position position="338"/>
    </location>
    <ligand>
        <name>Ca(2+)</name>
        <dbReference type="ChEBI" id="CHEBI:29108"/>
        <label>2</label>
    </ligand>
</feature>
<feature type="binding site" evidence="10">
    <location>
        <position position="343"/>
    </location>
    <ligand>
        <name>Ca(2+)</name>
        <dbReference type="ChEBI" id="CHEBI:29108"/>
        <label>2</label>
    </ligand>
</feature>
<feature type="modified residue" description="Phosphoserine" evidence="13">
    <location>
        <position position="14"/>
    </location>
</feature>
<proteinExistence type="evidence at protein level"/>
<protein>
    <recommendedName>
        <fullName evidence="10">Mitochondrial Rho GTPase 1</fullName>
        <shortName evidence="9">AtMIRO1</shortName>
        <ecNumber evidence="10">3.6.5.-</ecNumber>
    </recommendedName>
    <alternativeName>
        <fullName evidence="10">Miro-related GTPase 1</fullName>
    </alternativeName>
</protein>
<reference key="1">
    <citation type="journal article" date="2000" name="Nature">
        <title>Sequence and analysis of chromosome 5 of the plant Arabidopsis thaliana.</title>
        <authorList>
            <person name="Tabata S."/>
            <person name="Kaneko T."/>
            <person name="Nakamura Y."/>
            <person name="Kotani H."/>
            <person name="Kato T."/>
            <person name="Asamizu E."/>
            <person name="Miyajima N."/>
            <person name="Sasamoto S."/>
            <person name="Kimura T."/>
            <person name="Hosouchi T."/>
            <person name="Kawashima K."/>
            <person name="Kohara M."/>
            <person name="Matsumoto M."/>
            <person name="Matsuno A."/>
            <person name="Muraki A."/>
            <person name="Nakayama S."/>
            <person name="Nakazaki N."/>
            <person name="Naruo K."/>
            <person name="Okumura S."/>
            <person name="Shinpo S."/>
            <person name="Takeuchi C."/>
            <person name="Wada T."/>
            <person name="Watanabe A."/>
            <person name="Yamada M."/>
            <person name="Yasuda M."/>
            <person name="Sato S."/>
            <person name="de la Bastide M."/>
            <person name="Huang E."/>
            <person name="Spiegel L."/>
            <person name="Gnoj L."/>
            <person name="O'Shaughnessy A."/>
            <person name="Preston R."/>
            <person name="Habermann K."/>
            <person name="Murray J."/>
            <person name="Johnson D."/>
            <person name="Rohlfing T."/>
            <person name="Nelson J."/>
            <person name="Stoneking T."/>
            <person name="Pepin K."/>
            <person name="Spieth J."/>
            <person name="Sekhon M."/>
            <person name="Armstrong J."/>
            <person name="Becker M."/>
            <person name="Belter E."/>
            <person name="Cordum H."/>
            <person name="Cordes M."/>
            <person name="Courtney L."/>
            <person name="Courtney W."/>
            <person name="Dante M."/>
            <person name="Du H."/>
            <person name="Edwards J."/>
            <person name="Fryman J."/>
            <person name="Haakensen B."/>
            <person name="Lamar E."/>
            <person name="Latreille P."/>
            <person name="Leonard S."/>
            <person name="Meyer R."/>
            <person name="Mulvaney E."/>
            <person name="Ozersky P."/>
            <person name="Riley A."/>
            <person name="Strowmatt C."/>
            <person name="Wagner-McPherson C."/>
            <person name="Wollam A."/>
            <person name="Yoakum M."/>
            <person name="Bell M."/>
            <person name="Dedhia N."/>
            <person name="Parnell L."/>
            <person name="Shah R."/>
            <person name="Rodriguez M."/>
            <person name="Hoon See L."/>
            <person name="Vil D."/>
            <person name="Baker J."/>
            <person name="Kirchoff K."/>
            <person name="Toth K."/>
            <person name="King L."/>
            <person name="Bahret A."/>
            <person name="Miller B."/>
            <person name="Marra M.A."/>
            <person name="Martienssen R."/>
            <person name="McCombie W.R."/>
            <person name="Wilson R.K."/>
            <person name="Murphy G."/>
            <person name="Bancroft I."/>
            <person name="Volckaert G."/>
            <person name="Wambutt R."/>
            <person name="Duesterhoeft A."/>
            <person name="Stiekema W."/>
            <person name="Pohl T."/>
            <person name="Entian K.-D."/>
            <person name="Terryn N."/>
            <person name="Hartley N."/>
            <person name="Bent E."/>
            <person name="Johnson S."/>
            <person name="Langham S.-A."/>
            <person name="McCullagh B."/>
            <person name="Robben J."/>
            <person name="Grymonprez B."/>
            <person name="Zimmermann W."/>
            <person name="Ramsperger U."/>
            <person name="Wedler H."/>
            <person name="Balke K."/>
            <person name="Wedler E."/>
            <person name="Peters S."/>
            <person name="van Staveren M."/>
            <person name="Dirkse W."/>
            <person name="Mooijman P."/>
            <person name="Klein Lankhorst R."/>
            <person name="Weitzenegger T."/>
            <person name="Bothe G."/>
            <person name="Rose M."/>
            <person name="Hauf J."/>
            <person name="Berneiser S."/>
            <person name="Hempel S."/>
            <person name="Feldpausch M."/>
            <person name="Lamberth S."/>
            <person name="Villarroel R."/>
            <person name="Gielen J."/>
            <person name="Ardiles W."/>
            <person name="Bents O."/>
            <person name="Lemcke K."/>
            <person name="Kolesov G."/>
            <person name="Mayer K.F.X."/>
            <person name="Rudd S."/>
            <person name="Schoof H."/>
            <person name="Schueller C."/>
            <person name="Zaccaria P."/>
            <person name="Mewes H.-W."/>
            <person name="Bevan M."/>
            <person name="Fransz P.F."/>
        </authorList>
    </citation>
    <scope>NUCLEOTIDE SEQUENCE [LARGE SCALE GENOMIC DNA]</scope>
    <source>
        <strain>cv. Columbia</strain>
    </source>
</reference>
<reference key="2">
    <citation type="journal article" date="2017" name="Plant J.">
        <title>Araport11: a complete reannotation of the Arabidopsis thaliana reference genome.</title>
        <authorList>
            <person name="Cheng C.Y."/>
            <person name="Krishnakumar V."/>
            <person name="Chan A.P."/>
            <person name="Thibaud-Nissen F."/>
            <person name="Schobel S."/>
            <person name="Town C.D."/>
        </authorList>
    </citation>
    <scope>GENOME REANNOTATION</scope>
    <source>
        <strain>cv. Columbia</strain>
    </source>
</reference>
<reference key="3">
    <citation type="journal article" date="2003" name="Science">
        <title>Empirical analysis of transcriptional activity in the Arabidopsis genome.</title>
        <authorList>
            <person name="Yamada K."/>
            <person name="Lim J."/>
            <person name="Dale J.M."/>
            <person name="Chen H."/>
            <person name="Shinn P."/>
            <person name="Palm C.J."/>
            <person name="Southwick A.M."/>
            <person name="Wu H.C."/>
            <person name="Kim C.J."/>
            <person name="Nguyen M."/>
            <person name="Pham P.K."/>
            <person name="Cheuk R.F."/>
            <person name="Karlin-Newmann G."/>
            <person name="Liu S.X."/>
            <person name="Lam B."/>
            <person name="Sakano H."/>
            <person name="Wu T."/>
            <person name="Yu G."/>
            <person name="Miranda M."/>
            <person name="Quach H.L."/>
            <person name="Tripp M."/>
            <person name="Chang C.H."/>
            <person name="Lee J.M."/>
            <person name="Toriumi M.J."/>
            <person name="Chan M.M."/>
            <person name="Tang C.C."/>
            <person name="Onodera C.S."/>
            <person name="Deng J.M."/>
            <person name="Akiyama K."/>
            <person name="Ansari Y."/>
            <person name="Arakawa T."/>
            <person name="Banh J."/>
            <person name="Banno F."/>
            <person name="Bowser L."/>
            <person name="Brooks S.Y."/>
            <person name="Carninci P."/>
            <person name="Chao Q."/>
            <person name="Choy N."/>
            <person name="Enju A."/>
            <person name="Goldsmith A.D."/>
            <person name="Gurjal M."/>
            <person name="Hansen N.F."/>
            <person name="Hayashizaki Y."/>
            <person name="Johnson-Hopson C."/>
            <person name="Hsuan V.W."/>
            <person name="Iida K."/>
            <person name="Karnes M."/>
            <person name="Khan S."/>
            <person name="Koesema E."/>
            <person name="Ishida J."/>
            <person name="Jiang P.X."/>
            <person name="Jones T."/>
            <person name="Kawai J."/>
            <person name="Kamiya A."/>
            <person name="Meyers C."/>
            <person name="Nakajima M."/>
            <person name="Narusaka M."/>
            <person name="Seki M."/>
            <person name="Sakurai T."/>
            <person name="Satou M."/>
            <person name="Tamse R."/>
            <person name="Vaysberg M."/>
            <person name="Wallender E.K."/>
            <person name="Wong C."/>
            <person name="Yamamura Y."/>
            <person name="Yuan S."/>
            <person name="Shinozaki K."/>
            <person name="Davis R.W."/>
            <person name="Theologis A."/>
            <person name="Ecker J.R."/>
        </authorList>
    </citation>
    <scope>NUCLEOTIDE SEQUENCE [LARGE SCALE MRNA]</scope>
    <source>
        <strain>cv. Columbia</strain>
    </source>
</reference>
<reference key="4">
    <citation type="journal article" date="2007" name="Mol. Cell. Proteomics">
        <title>Multidimensional protein identification technology (MudPIT) analysis of ubiquitinated proteins in plants.</title>
        <authorList>
            <person name="Maor R."/>
            <person name="Jones A."/>
            <person name="Nuehse T.S."/>
            <person name="Studholme D.J."/>
            <person name="Peck S.C."/>
            <person name="Shirasu K."/>
        </authorList>
    </citation>
    <scope>IDENTIFICATION BY MASS SPECTROMETRY [LARGE SCALE ANALYSIS]</scope>
    <source>
        <strain>cv. Landsberg erecta</strain>
    </source>
</reference>
<reference key="5">
    <citation type="journal article" date="2008" name="Plant Cell">
        <title>EMB2473/MIRO1, an Arabidopsis Miro GTPase, is required for embryogenesis and influences mitochondrial morphology in pollen.</title>
        <authorList>
            <person name="Yamaoka S."/>
            <person name="Leaver C.J."/>
        </authorList>
    </citation>
    <scope>FUNCTION</scope>
    <scope>SUBCELLULAR LOCATION</scope>
    <scope>TISSUE SPECIFICITY</scope>
    <scope>DISRUPTION PHENOTYPE</scope>
</reference>
<reference key="6">
    <citation type="journal article" date="2009" name="Plant Physiol.">
        <title>Large-scale Arabidopsis phosphoproteome profiling reveals novel chloroplast kinase substrates and phosphorylation networks.</title>
        <authorList>
            <person name="Reiland S."/>
            <person name="Messerli G."/>
            <person name="Baerenfaller K."/>
            <person name="Gerrits B."/>
            <person name="Endler A."/>
            <person name="Grossmann J."/>
            <person name="Gruissem W."/>
            <person name="Baginsky S."/>
        </authorList>
    </citation>
    <scope>PHOSPHORYLATION [LARGE SCALE ANALYSIS] AT SER-14</scope>
    <scope>IDENTIFICATION BY MASS SPECTROMETRY [LARGE SCALE ANALYSIS]</scope>
</reference>
<reference key="7">
    <citation type="journal article" date="2011" name="Plant Cell Rep.">
        <title>MIRO1 influences the morphology and intracellular distribution of mitochondria during embryonic cell division in Arabidopsis.</title>
        <authorList>
            <person name="Yamaoka S."/>
            <person name="Nakajima M."/>
            <person name="Fujimoto M."/>
            <person name="Tsutsumi N."/>
        </authorList>
    </citation>
    <scope>FUNCTION</scope>
    <scope>DISRUPTION PHENOTYPE</scope>
</reference>
<reference key="8">
    <citation type="journal article" date="2011" name="PLoS ONE">
        <title>Arabidopsis thaliana MIRO1 and MIRO2 GTPases are unequally redundant in pollen tube growth and fusion of polar nuclei during female gametogenesis.</title>
        <authorList>
            <person name="Sormo C.G."/>
            <person name="Brembu T."/>
            <person name="Winge P."/>
            <person name="Bones A.M."/>
        </authorList>
    </citation>
    <scope>FUNCTION</scope>
</reference>
<keyword id="KW-0106">Calcium</keyword>
<keyword id="KW-0342">GTP-binding</keyword>
<keyword id="KW-0378">Hydrolase</keyword>
<keyword id="KW-0472">Membrane</keyword>
<keyword id="KW-0479">Metal-binding</keyword>
<keyword id="KW-0496">Mitochondrion</keyword>
<keyword id="KW-1000">Mitochondrion outer membrane</keyword>
<keyword id="KW-0547">Nucleotide-binding</keyword>
<keyword id="KW-0597">Phosphoprotein</keyword>
<keyword id="KW-1185">Reference proteome</keyword>
<keyword id="KW-0677">Repeat</keyword>
<keyword id="KW-0812">Transmembrane</keyword>
<keyword id="KW-1133">Transmembrane helix</keyword>
<name>MIRO1_ARATH</name>
<organism>
    <name type="scientific">Arabidopsis thaliana</name>
    <name type="common">Mouse-ear cress</name>
    <dbReference type="NCBI Taxonomy" id="3702"/>
    <lineage>
        <taxon>Eukaryota</taxon>
        <taxon>Viridiplantae</taxon>
        <taxon>Streptophyta</taxon>
        <taxon>Embryophyta</taxon>
        <taxon>Tracheophyta</taxon>
        <taxon>Spermatophyta</taxon>
        <taxon>Magnoliopsida</taxon>
        <taxon>eudicotyledons</taxon>
        <taxon>Gunneridae</taxon>
        <taxon>Pentapetalae</taxon>
        <taxon>rosids</taxon>
        <taxon>malvids</taxon>
        <taxon>Brassicales</taxon>
        <taxon>Brassicaceae</taxon>
        <taxon>Camelineae</taxon>
        <taxon>Arabidopsis</taxon>
    </lineage>
</organism>
<gene>
    <name evidence="8" type="primary">MIRO1</name>
    <name evidence="12" type="ordered locus">At5g27540</name>
</gene>
<comment type="function">
    <text evidence="5 6 7">Mitochondrial GTPase required to maintain proper development, morphology and intracellular distribution of mitochondria, which in turn are essential for the progress of embryonic cell division, development of haploid male and female gametes, and pollen tube growth.</text>
</comment>
<comment type="subcellular location">
    <subcellularLocation>
        <location evidence="11">Mitochondrion outer membrane</location>
        <topology evidence="10">Single-pass type IV membrane protein</topology>
    </subcellularLocation>
</comment>
<comment type="tissue specificity">
    <text evidence="5">Expressed in roots, leaves, stems, flowers and siliques.</text>
</comment>
<comment type="disruption phenotype">
    <text evidence="5 6">Embryonic lethality between the apical 2-cell and the 4-terminal-cell embryo stage (PubMed:18344283, PubMed:20931334). Impaired in pollen germination and pollen tube growth (PubMed:18344283).</text>
</comment>
<comment type="similarity">
    <text evidence="3 10">Belongs to the mitochondrial Rho GTPase family.</text>
</comment>